<accession>P29075</accession>
<protein>
    <recommendedName>
        <fullName>Non-structural protein 4</fullName>
        <shortName>ns4</shortName>
    </recommendedName>
    <alternativeName>
        <fullName>Accessory protein 4</fullName>
    </alternativeName>
</protein>
<dbReference type="EMBL" id="M64835">
    <property type="status" value="NOT_ANNOTATED_CDS"/>
    <property type="molecule type" value="Genomic_RNA"/>
</dbReference>
<dbReference type="PIR" id="A40512">
    <property type="entry name" value="MNIHMS"/>
</dbReference>
<dbReference type="SMR" id="P29075"/>
<dbReference type="GO" id="GO:0033644">
    <property type="term" value="C:host cell membrane"/>
    <property type="evidence" value="ECO:0007669"/>
    <property type="project" value="UniProtKB-SubCell"/>
</dbReference>
<dbReference type="GO" id="GO:0016020">
    <property type="term" value="C:membrane"/>
    <property type="evidence" value="ECO:0007669"/>
    <property type="project" value="UniProtKB-KW"/>
</dbReference>
<dbReference type="InterPro" id="IPR005603">
    <property type="entry name" value="Corona_NS4"/>
</dbReference>
<dbReference type="Pfam" id="PF03905">
    <property type="entry name" value="Corona_NS4"/>
    <property type="match status" value="1"/>
</dbReference>
<sequence>MAVLGPKATLAAVFIGPFIVACMLGIGLVYLLQLQVQIFHVKDTIRVTGKPATVSYTISTPVTPSATTLDGTTYTLIRPTSSYTRVYLGKTRGFDTSTFGPKVLDYITSSKPHLNSGRPYSLSC</sequence>
<gene>
    <name type="ORF">4</name>
</gene>
<evidence type="ECO:0000255" key="1"/>
<evidence type="ECO:0000305" key="2"/>
<comment type="subcellular location">
    <subcellularLocation>
        <location evidence="2">Host membrane</location>
        <topology evidence="2">Single-pass membrane protein</topology>
    </subcellularLocation>
</comment>
<comment type="similarity">
    <text evidence="2">Belongs to the coronaviruses ns4/ns4.8 protein family.</text>
</comment>
<name>NS4_CVMS</name>
<feature type="chain" id="PRO_0000106069" description="Non-structural protein 4">
    <location>
        <begin position="1"/>
        <end position="124"/>
    </location>
</feature>
<feature type="transmembrane region" description="Helical" evidence="1">
    <location>
        <begin position="12"/>
        <end position="32"/>
    </location>
</feature>
<organismHost>
    <name type="scientific">Mus musculus</name>
    <name type="common">Mouse</name>
    <dbReference type="NCBI Taxonomy" id="10090"/>
</organismHost>
<keyword id="KW-1043">Host membrane</keyword>
<keyword id="KW-0472">Membrane</keyword>
<keyword id="KW-0812">Transmembrane</keyword>
<keyword id="KW-1133">Transmembrane helix</keyword>
<proteinExistence type="inferred from homology"/>
<organism>
    <name type="scientific">Murine coronavirus (strain S)</name>
    <name type="common">MHV-S</name>
    <name type="synonym">Murine hepatitis virus</name>
    <dbReference type="NCBI Taxonomy" id="11145"/>
    <lineage>
        <taxon>Viruses</taxon>
        <taxon>Riboviria</taxon>
        <taxon>Orthornavirae</taxon>
        <taxon>Pisuviricota</taxon>
        <taxon>Pisoniviricetes</taxon>
        <taxon>Nidovirales</taxon>
        <taxon>Cornidovirineae</taxon>
        <taxon>Coronaviridae</taxon>
        <taxon>Orthocoronavirinae</taxon>
        <taxon>Betacoronavirus</taxon>
        <taxon>Embecovirus</taxon>
        <taxon>Murine coronavirus</taxon>
    </lineage>
</organism>
<reference key="1">
    <citation type="journal article" date="1991" name="J. Virol.">
        <title>Mouse hepatitis virus S RNA sequence reveals that nonstructural proteins ns4 and ns5a are not essential for murine coronavirus replication.</title>
        <authorList>
            <person name="Yokomori K."/>
            <person name="Lai M.M.C."/>
        </authorList>
    </citation>
    <scope>NUCLEOTIDE SEQUENCE [GENOMIC RNA]</scope>
</reference>